<keyword id="KW-1185">Reference proteome</keyword>
<sequence>MPYLGLLNKDEVLPPQVPAGTTVECPACGEGMSVVRSYNRGSTFVSRHFSHKGGGKGGGSGAGSNDGGCSGESEMHHKMKAIAYARLENDYPEATIELESNLEGRIPDVLLEFPEPCSPYGKGIAVEAQYQNKGKDKAAVVEHYLDREYSVAWLEEDAFSTHDVDLSGILSVWPYALPDRYETEGYPDVTRWLWQEKNPTVEMEIPIPADYWMSFDKSGEWVTIAEKSIKRRGSARISRTPDGHLTFSLGKAKGWGESESLSVQVVPNDVLKLRSFADDLERKAFGEDRPSPEECDPEWHELSKRWFKGSPTVTAWITAALPDPDGDSDVVVTLWKKQKETERVAMRVESYAAENLRDLADLLDRAFEIEKS</sequence>
<name>Y3024_HALLT</name>
<comment type="sequence caution" evidence="2">
    <conflict type="erroneous initiation">
        <sequence resource="EMBL-CDS" id="ACM58569"/>
    </conflict>
    <text>Truncated N-terminus.</text>
</comment>
<proteinExistence type="predicted"/>
<gene>
    <name type="ordered locus">Hlac_3024</name>
</gene>
<protein>
    <recommendedName>
        <fullName>Uncharacterized protein Hlac_3024</fullName>
    </recommendedName>
</protein>
<feature type="chain" id="PRO_0000411963" description="Uncharacterized protein Hlac_3024">
    <location>
        <begin position="1"/>
        <end position="372"/>
    </location>
</feature>
<feature type="region of interest" description="Disordered" evidence="1">
    <location>
        <begin position="49"/>
        <end position="72"/>
    </location>
</feature>
<feature type="compositionally biased region" description="Gly residues" evidence="1">
    <location>
        <begin position="55"/>
        <end position="70"/>
    </location>
</feature>
<evidence type="ECO:0000256" key="1">
    <source>
        <dbReference type="SAM" id="MobiDB-lite"/>
    </source>
</evidence>
<evidence type="ECO:0000305" key="2"/>
<reference key="1">
    <citation type="journal article" date="2016" name="Stand. Genomic Sci.">
        <title>Complete genome sequence of the Antarctic Halorubrum lacusprofundi type strain ACAM 34.</title>
        <authorList>
            <person name="Anderson I.J."/>
            <person name="DasSarma P."/>
            <person name="Lucas S."/>
            <person name="Copeland A."/>
            <person name="Lapidus A."/>
            <person name="Del Rio T.G."/>
            <person name="Tice H."/>
            <person name="Dalin E."/>
            <person name="Bruce D.C."/>
            <person name="Goodwin L."/>
            <person name="Pitluck S."/>
            <person name="Sims D."/>
            <person name="Brettin T.S."/>
            <person name="Detter J.C."/>
            <person name="Han C.S."/>
            <person name="Larimer F."/>
            <person name="Hauser L."/>
            <person name="Land M."/>
            <person name="Ivanova N."/>
            <person name="Richardson P."/>
            <person name="Cavicchioli R."/>
            <person name="DasSarma S."/>
            <person name="Woese C.R."/>
            <person name="Kyrpides N.C."/>
        </authorList>
    </citation>
    <scope>NUCLEOTIDE SEQUENCE [LARGE SCALE GENOMIC DNA]</scope>
    <source>
        <strain>ATCC 49239 / DSM 5036 / JCM 8891 / ACAM 34</strain>
    </source>
</reference>
<organism>
    <name type="scientific">Halorubrum lacusprofundi (strain ATCC 49239 / DSM 5036 / JCM 8891 / ACAM 34)</name>
    <dbReference type="NCBI Taxonomy" id="416348"/>
    <lineage>
        <taxon>Archaea</taxon>
        <taxon>Methanobacteriati</taxon>
        <taxon>Methanobacteriota</taxon>
        <taxon>Stenosarchaea group</taxon>
        <taxon>Halobacteria</taxon>
        <taxon>Halobacteriales</taxon>
        <taxon>Haloferacaceae</taxon>
        <taxon>Halorubrum</taxon>
    </lineage>
</organism>
<dbReference type="EMBL" id="CP001366">
    <property type="protein sequence ID" value="ACM58569.1"/>
    <property type="status" value="ALT_INIT"/>
    <property type="molecule type" value="Genomic_DNA"/>
</dbReference>
<dbReference type="RefSeq" id="WP_009762328.1">
    <property type="nucleotide sequence ID" value="NC_012028.1"/>
</dbReference>
<dbReference type="GeneID" id="7399000"/>
<dbReference type="KEGG" id="hla:Hlac_3024"/>
<dbReference type="eggNOG" id="arCOG13005">
    <property type="taxonomic scope" value="Archaea"/>
</dbReference>
<dbReference type="HOGENOM" id="CLU_059312_0_0_2"/>
<dbReference type="Proteomes" id="UP000000740">
    <property type="component" value="Chromosome 2"/>
</dbReference>
<accession>B9LV56</accession>